<gene>
    <name type="primary">TMA16</name>
    <name type="synonym">C4orf43</name>
</gene>
<protein>
    <recommendedName>
        <fullName>Translation machinery-associated protein 16</fullName>
    </recommendedName>
</protein>
<organism>
    <name type="scientific">Homo sapiens</name>
    <name type="common">Human</name>
    <dbReference type="NCBI Taxonomy" id="9606"/>
    <lineage>
        <taxon>Eukaryota</taxon>
        <taxon>Metazoa</taxon>
        <taxon>Chordata</taxon>
        <taxon>Craniata</taxon>
        <taxon>Vertebrata</taxon>
        <taxon>Euteleostomi</taxon>
        <taxon>Mammalia</taxon>
        <taxon>Eutheria</taxon>
        <taxon>Euarchontoglires</taxon>
        <taxon>Primates</taxon>
        <taxon>Haplorrhini</taxon>
        <taxon>Catarrhini</taxon>
        <taxon>Hominidae</taxon>
        <taxon>Homo</taxon>
    </lineage>
</organism>
<comment type="function">
    <text evidence="5">Involved in the biogenesis of the 60S ribosomal subunit in the nucleus.</text>
</comment>
<comment type="subunit">
    <text evidence="5">Associates with pre-60S ribosomal particles.</text>
</comment>
<comment type="interaction">
    <interactant intactId="EBI-1045338">
        <id>Q96EY4</id>
    </interactant>
    <interactant intactId="EBI-297683">
        <id>Q96CW1</id>
        <label>AP2M1</label>
    </interactant>
    <organismsDiffer>false</organismsDiffer>
    <experiments>3</experiments>
</comment>
<comment type="interaction">
    <interactant intactId="EBI-1045338">
        <id>Q96EY4</id>
    </interactant>
    <interactant intactId="EBI-10276168">
        <id>Q8WTX7</id>
        <label>CASTOR1</label>
    </interactant>
    <organismsDiffer>false</organismsDiffer>
    <experiments>3</experiments>
</comment>
<comment type="interaction">
    <interactant intactId="EBI-1045338">
        <id>Q96EY4</id>
    </interactant>
    <interactant intactId="EBI-466029">
        <id>P42858</id>
        <label>HTT</label>
    </interactant>
    <organismsDiffer>false</organismsDiffer>
    <experiments>3</experiments>
</comment>
<comment type="interaction">
    <interactant intactId="EBI-1045338">
        <id>Q96EY4</id>
    </interactant>
    <interactant intactId="EBI-746999">
        <id>O95198</id>
        <label>KLHL2</label>
    </interactant>
    <organismsDiffer>false</organismsDiffer>
    <experiments>7</experiments>
</comment>
<comment type="interaction">
    <interactant intactId="EBI-1045338">
        <id>Q96EY4</id>
    </interactant>
    <interactant intactId="EBI-10172290">
        <id>P60409</id>
        <label>KRTAP10-7</label>
    </interactant>
    <organismsDiffer>false</organismsDiffer>
    <experiments>3</experiments>
</comment>
<comment type="interaction">
    <interactant intactId="EBI-1045338">
        <id>Q96EY4</id>
    </interactant>
    <interactant intactId="EBI-947459">
        <id>Q9H2G4</id>
        <label>TSPYL2</label>
    </interactant>
    <organismsDiffer>false</organismsDiffer>
    <experiments>3</experiments>
</comment>
<comment type="subcellular location">
    <subcellularLocation>
        <location evidence="7">Nucleus</location>
    </subcellularLocation>
</comment>
<comment type="similarity">
    <text evidence="6">Belongs to the TMA16 family.</text>
</comment>
<keyword id="KW-0002">3D-structure</keyword>
<keyword id="KW-0013">ADP-ribosylation</keyword>
<keyword id="KW-0539">Nucleus</keyword>
<keyword id="KW-1267">Proteomics identification</keyword>
<keyword id="KW-1185">Reference proteome</keyword>
<keyword id="KW-0690">Ribosome biogenesis</keyword>
<feature type="chain" id="PRO_0000321559" description="Translation machinery-associated protein 16">
    <location>
        <begin position="1"/>
        <end position="203"/>
    </location>
</feature>
<feature type="region of interest" description="Disordered" evidence="1">
    <location>
        <begin position="1"/>
        <end position="39"/>
    </location>
</feature>
<feature type="compositionally biased region" description="Basic and acidic residues" evidence="1">
    <location>
        <begin position="29"/>
        <end position="39"/>
    </location>
</feature>
<feature type="modified residue" description="ADP-ribosylserine" evidence="4">
    <location>
        <position position="9"/>
    </location>
</feature>
<feature type="sequence variant" id="VAR_054013" description="In dbSNP:rs34907234.">
    <original>R</original>
    <variation>Q</variation>
    <location>
        <position position="12"/>
    </location>
</feature>
<feature type="sequence variant" id="VAR_039349" description="In dbSNP:rs2304802." evidence="2 3">
    <original>Q</original>
    <variation>P</variation>
    <location>
        <position position="65"/>
    </location>
</feature>
<feature type="sequence variant" id="VAR_039350" description="In dbSNP:rs1561736." evidence="2 3">
    <original>I</original>
    <variation>T</variation>
    <location>
        <position position="176"/>
    </location>
</feature>
<feature type="sequence conflict" description="In Ref. 1; BAA92053." evidence="6" ref="1">
    <original>L</original>
    <variation>P</variation>
    <location>
        <position position="62"/>
    </location>
</feature>
<reference key="1">
    <citation type="journal article" date="2004" name="Nat. Genet.">
        <title>Complete sequencing and characterization of 21,243 full-length human cDNAs.</title>
        <authorList>
            <person name="Ota T."/>
            <person name="Suzuki Y."/>
            <person name="Nishikawa T."/>
            <person name="Otsuki T."/>
            <person name="Sugiyama T."/>
            <person name="Irie R."/>
            <person name="Wakamatsu A."/>
            <person name="Hayashi K."/>
            <person name="Sato H."/>
            <person name="Nagai K."/>
            <person name="Kimura K."/>
            <person name="Makita H."/>
            <person name="Sekine M."/>
            <person name="Obayashi M."/>
            <person name="Nishi T."/>
            <person name="Shibahara T."/>
            <person name="Tanaka T."/>
            <person name="Ishii S."/>
            <person name="Yamamoto J."/>
            <person name="Saito K."/>
            <person name="Kawai Y."/>
            <person name="Isono Y."/>
            <person name="Nakamura Y."/>
            <person name="Nagahari K."/>
            <person name="Murakami K."/>
            <person name="Yasuda T."/>
            <person name="Iwayanagi T."/>
            <person name="Wagatsuma M."/>
            <person name="Shiratori A."/>
            <person name="Sudo H."/>
            <person name="Hosoiri T."/>
            <person name="Kaku Y."/>
            <person name="Kodaira H."/>
            <person name="Kondo H."/>
            <person name="Sugawara M."/>
            <person name="Takahashi M."/>
            <person name="Kanda K."/>
            <person name="Yokoi T."/>
            <person name="Furuya T."/>
            <person name="Kikkawa E."/>
            <person name="Omura Y."/>
            <person name="Abe K."/>
            <person name="Kamihara K."/>
            <person name="Katsuta N."/>
            <person name="Sato K."/>
            <person name="Tanikawa M."/>
            <person name="Yamazaki M."/>
            <person name="Ninomiya K."/>
            <person name="Ishibashi T."/>
            <person name="Yamashita H."/>
            <person name="Murakawa K."/>
            <person name="Fujimori K."/>
            <person name="Tanai H."/>
            <person name="Kimata M."/>
            <person name="Watanabe M."/>
            <person name="Hiraoka S."/>
            <person name="Chiba Y."/>
            <person name="Ishida S."/>
            <person name="Ono Y."/>
            <person name="Takiguchi S."/>
            <person name="Watanabe S."/>
            <person name="Yosida M."/>
            <person name="Hotuta T."/>
            <person name="Kusano J."/>
            <person name="Kanehori K."/>
            <person name="Takahashi-Fujii A."/>
            <person name="Hara H."/>
            <person name="Tanase T.-O."/>
            <person name="Nomura Y."/>
            <person name="Togiya S."/>
            <person name="Komai F."/>
            <person name="Hara R."/>
            <person name="Takeuchi K."/>
            <person name="Arita M."/>
            <person name="Imose N."/>
            <person name="Musashino K."/>
            <person name="Yuuki H."/>
            <person name="Oshima A."/>
            <person name="Sasaki N."/>
            <person name="Aotsuka S."/>
            <person name="Yoshikawa Y."/>
            <person name="Matsunawa H."/>
            <person name="Ichihara T."/>
            <person name="Shiohata N."/>
            <person name="Sano S."/>
            <person name="Moriya S."/>
            <person name="Momiyama H."/>
            <person name="Satoh N."/>
            <person name="Takami S."/>
            <person name="Terashima Y."/>
            <person name="Suzuki O."/>
            <person name="Nakagawa S."/>
            <person name="Senoh A."/>
            <person name="Mizoguchi H."/>
            <person name="Goto Y."/>
            <person name="Shimizu F."/>
            <person name="Wakebe H."/>
            <person name="Hishigaki H."/>
            <person name="Watanabe T."/>
            <person name="Sugiyama A."/>
            <person name="Takemoto M."/>
            <person name="Kawakami B."/>
            <person name="Yamazaki M."/>
            <person name="Watanabe K."/>
            <person name="Kumagai A."/>
            <person name="Itakura S."/>
            <person name="Fukuzumi Y."/>
            <person name="Fujimori Y."/>
            <person name="Komiyama M."/>
            <person name="Tashiro H."/>
            <person name="Tanigami A."/>
            <person name="Fujiwara T."/>
            <person name="Ono T."/>
            <person name="Yamada K."/>
            <person name="Fujii Y."/>
            <person name="Ozaki K."/>
            <person name="Hirao M."/>
            <person name="Ohmori Y."/>
            <person name="Kawabata A."/>
            <person name="Hikiji T."/>
            <person name="Kobatake N."/>
            <person name="Inagaki H."/>
            <person name="Ikema Y."/>
            <person name="Okamoto S."/>
            <person name="Okitani R."/>
            <person name="Kawakami T."/>
            <person name="Noguchi S."/>
            <person name="Itoh T."/>
            <person name="Shigeta K."/>
            <person name="Senba T."/>
            <person name="Matsumura K."/>
            <person name="Nakajima Y."/>
            <person name="Mizuno T."/>
            <person name="Morinaga M."/>
            <person name="Sasaki M."/>
            <person name="Togashi T."/>
            <person name="Oyama M."/>
            <person name="Hata H."/>
            <person name="Watanabe M."/>
            <person name="Komatsu T."/>
            <person name="Mizushima-Sugano J."/>
            <person name="Satoh T."/>
            <person name="Shirai Y."/>
            <person name="Takahashi Y."/>
            <person name="Nakagawa K."/>
            <person name="Okumura K."/>
            <person name="Nagase T."/>
            <person name="Nomura N."/>
            <person name="Kikuchi H."/>
            <person name="Masuho Y."/>
            <person name="Yamashita R."/>
            <person name="Nakai K."/>
            <person name="Yada T."/>
            <person name="Nakamura Y."/>
            <person name="Ohara O."/>
            <person name="Isogai T."/>
            <person name="Sugano S."/>
        </authorList>
    </citation>
    <scope>NUCLEOTIDE SEQUENCE [LARGE SCALE MRNA]</scope>
    <scope>VARIANTS PRO-65 AND THR-176</scope>
    <source>
        <tissue>Placenta</tissue>
    </source>
</reference>
<reference key="2">
    <citation type="journal article" date="2005" name="Nature">
        <title>Generation and annotation of the DNA sequences of human chromosomes 2 and 4.</title>
        <authorList>
            <person name="Hillier L.W."/>
            <person name="Graves T.A."/>
            <person name="Fulton R.S."/>
            <person name="Fulton L.A."/>
            <person name="Pepin K.H."/>
            <person name="Minx P."/>
            <person name="Wagner-McPherson C."/>
            <person name="Layman D."/>
            <person name="Wylie K."/>
            <person name="Sekhon M."/>
            <person name="Becker M.C."/>
            <person name="Fewell G.A."/>
            <person name="Delehaunty K.D."/>
            <person name="Miner T.L."/>
            <person name="Nash W.E."/>
            <person name="Kremitzki C."/>
            <person name="Oddy L."/>
            <person name="Du H."/>
            <person name="Sun H."/>
            <person name="Bradshaw-Cordum H."/>
            <person name="Ali J."/>
            <person name="Carter J."/>
            <person name="Cordes M."/>
            <person name="Harris A."/>
            <person name="Isak A."/>
            <person name="van Brunt A."/>
            <person name="Nguyen C."/>
            <person name="Du F."/>
            <person name="Courtney L."/>
            <person name="Kalicki J."/>
            <person name="Ozersky P."/>
            <person name="Abbott S."/>
            <person name="Armstrong J."/>
            <person name="Belter E.A."/>
            <person name="Caruso L."/>
            <person name="Cedroni M."/>
            <person name="Cotton M."/>
            <person name="Davidson T."/>
            <person name="Desai A."/>
            <person name="Elliott G."/>
            <person name="Erb T."/>
            <person name="Fronick C."/>
            <person name="Gaige T."/>
            <person name="Haakenson W."/>
            <person name="Haglund K."/>
            <person name="Holmes A."/>
            <person name="Harkins R."/>
            <person name="Kim K."/>
            <person name="Kruchowski S.S."/>
            <person name="Strong C.M."/>
            <person name="Grewal N."/>
            <person name="Goyea E."/>
            <person name="Hou S."/>
            <person name="Levy A."/>
            <person name="Martinka S."/>
            <person name="Mead K."/>
            <person name="McLellan M.D."/>
            <person name="Meyer R."/>
            <person name="Randall-Maher J."/>
            <person name="Tomlinson C."/>
            <person name="Dauphin-Kohlberg S."/>
            <person name="Kozlowicz-Reilly A."/>
            <person name="Shah N."/>
            <person name="Swearengen-Shahid S."/>
            <person name="Snider J."/>
            <person name="Strong J.T."/>
            <person name="Thompson J."/>
            <person name="Yoakum M."/>
            <person name="Leonard S."/>
            <person name="Pearman C."/>
            <person name="Trani L."/>
            <person name="Radionenko M."/>
            <person name="Waligorski J.E."/>
            <person name="Wang C."/>
            <person name="Rock S.M."/>
            <person name="Tin-Wollam A.-M."/>
            <person name="Maupin R."/>
            <person name="Latreille P."/>
            <person name="Wendl M.C."/>
            <person name="Yang S.-P."/>
            <person name="Pohl C."/>
            <person name="Wallis J.W."/>
            <person name="Spieth J."/>
            <person name="Bieri T.A."/>
            <person name="Berkowicz N."/>
            <person name="Nelson J.O."/>
            <person name="Osborne J."/>
            <person name="Ding L."/>
            <person name="Meyer R."/>
            <person name="Sabo A."/>
            <person name="Shotland Y."/>
            <person name="Sinha P."/>
            <person name="Wohldmann P.E."/>
            <person name="Cook L.L."/>
            <person name="Hickenbotham M.T."/>
            <person name="Eldred J."/>
            <person name="Williams D."/>
            <person name="Jones T.A."/>
            <person name="She X."/>
            <person name="Ciccarelli F.D."/>
            <person name="Izaurralde E."/>
            <person name="Taylor J."/>
            <person name="Schmutz J."/>
            <person name="Myers R.M."/>
            <person name="Cox D.R."/>
            <person name="Huang X."/>
            <person name="McPherson J.D."/>
            <person name="Mardis E.R."/>
            <person name="Clifton S.W."/>
            <person name="Warren W.C."/>
            <person name="Chinwalla A.T."/>
            <person name="Eddy S.R."/>
            <person name="Marra M.A."/>
            <person name="Ovcharenko I."/>
            <person name="Furey T.S."/>
            <person name="Miller W."/>
            <person name="Eichler E.E."/>
            <person name="Bork P."/>
            <person name="Suyama M."/>
            <person name="Torrents D."/>
            <person name="Waterston R.H."/>
            <person name="Wilson R.K."/>
        </authorList>
    </citation>
    <scope>NUCLEOTIDE SEQUENCE [LARGE SCALE GENOMIC DNA]</scope>
</reference>
<reference key="3">
    <citation type="journal article" date="2004" name="Genome Res.">
        <title>The status, quality, and expansion of the NIH full-length cDNA project: the Mammalian Gene Collection (MGC).</title>
        <authorList>
            <consortium name="The MGC Project Team"/>
        </authorList>
    </citation>
    <scope>NUCLEOTIDE SEQUENCE [LARGE SCALE MRNA]</scope>
    <scope>VARIANTS PRO-65 AND THR-176</scope>
    <source>
        <tissue>Muscle</tissue>
    </source>
</reference>
<reference key="4">
    <citation type="journal article" date="2011" name="BMC Syst. Biol.">
        <title>Initial characterization of the human central proteome.</title>
        <authorList>
            <person name="Burkard T.R."/>
            <person name="Planyavsky M."/>
            <person name="Kaupe I."/>
            <person name="Breitwieser F.P."/>
            <person name="Buerckstuemmer T."/>
            <person name="Bennett K.L."/>
            <person name="Superti-Furga G."/>
            <person name="Colinge J."/>
        </authorList>
    </citation>
    <scope>IDENTIFICATION BY MASS SPECTROMETRY [LARGE SCALE ANALYSIS]</scope>
</reference>
<reference key="5">
    <citation type="journal article" date="2012" name="Proc. Natl. Acad. Sci. U.S.A.">
        <title>N-terminal acetylome analyses and functional insights of the N-terminal acetyltransferase NatB.</title>
        <authorList>
            <person name="Van Damme P."/>
            <person name="Lasa M."/>
            <person name="Polevoda B."/>
            <person name="Gazquez C."/>
            <person name="Elosegui-Artola A."/>
            <person name="Kim D.S."/>
            <person name="De Juan-Pardo E."/>
            <person name="Demeyer K."/>
            <person name="Hole K."/>
            <person name="Larrea E."/>
            <person name="Timmerman E."/>
            <person name="Prieto J."/>
            <person name="Arnesen T."/>
            <person name="Sherman F."/>
            <person name="Gevaert K."/>
            <person name="Aldabe R."/>
        </authorList>
    </citation>
    <scope>IDENTIFICATION BY MASS SPECTROMETRY [LARGE SCALE ANALYSIS]</scope>
</reference>
<reference key="6">
    <citation type="journal article" date="2017" name="Mol. Cell">
        <title>Serine ADP-ribosylation depends on HPF1.</title>
        <authorList>
            <person name="Bonfiglio J.J."/>
            <person name="Fontana P."/>
            <person name="Zhang Q."/>
            <person name="Colby T."/>
            <person name="Gibbs-Seymour I."/>
            <person name="Atanassov I."/>
            <person name="Bartlett E."/>
            <person name="Zaja R."/>
            <person name="Ahel I."/>
            <person name="Matic I."/>
        </authorList>
    </citation>
    <scope>ADP-RIBOSYLATION AT SER-9</scope>
</reference>
<reference evidence="8 9" key="7">
    <citation type="journal article" date="2020" name="Nat. Commun.">
        <title>Structural snapshots of human pre-60S ribosomal particles before and after nuclear export.</title>
        <authorList>
            <person name="Liang X."/>
            <person name="Zuo M.Q."/>
            <person name="Zhang Y."/>
            <person name="Li N."/>
            <person name="Ma C."/>
            <person name="Dong M.Q."/>
            <person name="Gao N."/>
        </authorList>
    </citation>
    <scope>STRUCTURE BY ELECTRON MICROSCOPY (3.13 ANGSTROMS)</scope>
    <scope>FUNCTION</scope>
    <scope>INTERACTION WITH PRE-60S RIBOSOMAL PARTICLES</scope>
    <scope>SUBCELLULAR LOCATION</scope>
</reference>
<proteinExistence type="evidence at protein level"/>
<evidence type="ECO:0000256" key="1">
    <source>
        <dbReference type="SAM" id="MobiDB-lite"/>
    </source>
</evidence>
<evidence type="ECO:0000269" key="2">
    <source>
    </source>
</evidence>
<evidence type="ECO:0000269" key="3">
    <source>
    </source>
</evidence>
<evidence type="ECO:0000269" key="4">
    <source>
    </source>
</evidence>
<evidence type="ECO:0000269" key="5">
    <source>
    </source>
</evidence>
<evidence type="ECO:0000305" key="6"/>
<evidence type="ECO:0000305" key="7">
    <source>
    </source>
</evidence>
<evidence type="ECO:0007744" key="8">
    <source>
        <dbReference type="PDB" id="6LSS"/>
    </source>
</evidence>
<evidence type="ECO:0007744" key="9">
    <source>
        <dbReference type="PDB" id="6LU8"/>
    </source>
</evidence>
<dbReference type="EMBL" id="AK002046">
    <property type="protein sequence ID" value="BAA92053.1"/>
    <property type="molecule type" value="mRNA"/>
</dbReference>
<dbReference type="EMBL" id="AC093788">
    <property type="status" value="NOT_ANNOTATED_CDS"/>
    <property type="molecule type" value="Genomic_DNA"/>
</dbReference>
<dbReference type="EMBL" id="BC011842">
    <property type="protein sequence ID" value="AAH11842.1"/>
    <property type="molecule type" value="mRNA"/>
</dbReference>
<dbReference type="CCDS" id="CCDS43278.1"/>
<dbReference type="RefSeq" id="NP_060822.2">
    <property type="nucleotide sequence ID" value="NM_018352.3"/>
</dbReference>
<dbReference type="PDB" id="6LSS">
    <property type="method" value="EM"/>
    <property type="resolution" value="3.23 A"/>
    <property type="chains" value="R=1-203"/>
</dbReference>
<dbReference type="PDB" id="6LU8">
    <property type="method" value="EM"/>
    <property type="resolution" value="3.13 A"/>
    <property type="chains" value="R=1-203"/>
</dbReference>
<dbReference type="PDB" id="8FLA">
    <property type="method" value="EM"/>
    <property type="resolution" value="2.63 A"/>
    <property type="chains" value="NR=1-203"/>
</dbReference>
<dbReference type="PDB" id="8FLB">
    <property type="method" value="EM"/>
    <property type="resolution" value="2.55 A"/>
    <property type="chains" value="NR=1-203"/>
</dbReference>
<dbReference type="PDB" id="8FLC">
    <property type="method" value="EM"/>
    <property type="resolution" value="2.76 A"/>
    <property type="chains" value="NR=1-203"/>
</dbReference>
<dbReference type="PDB" id="8IDT">
    <property type="method" value="EM"/>
    <property type="resolution" value="2.80 A"/>
    <property type="chains" value="R=1-203"/>
</dbReference>
<dbReference type="PDB" id="8IDY">
    <property type="method" value="EM"/>
    <property type="resolution" value="3.00 A"/>
    <property type="chains" value="R=1-203"/>
</dbReference>
<dbReference type="PDB" id="8INE">
    <property type="method" value="EM"/>
    <property type="resolution" value="3.20 A"/>
    <property type="chains" value="R=1-203"/>
</dbReference>
<dbReference type="PDB" id="8INF">
    <property type="method" value="EM"/>
    <property type="resolution" value="3.00 A"/>
    <property type="chains" value="R=1-203"/>
</dbReference>
<dbReference type="PDBsum" id="6LSS"/>
<dbReference type="PDBsum" id="6LU8"/>
<dbReference type="PDBsum" id="8FLA"/>
<dbReference type="PDBsum" id="8FLB"/>
<dbReference type="PDBsum" id="8FLC"/>
<dbReference type="PDBsum" id="8IDT"/>
<dbReference type="PDBsum" id="8IDY"/>
<dbReference type="PDBsum" id="8INE"/>
<dbReference type="PDBsum" id="8INF"/>
<dbReference type="EMDB" id="EMD-0964"/>
<dbReference type="EMDB" id="EMD-0978"/>
<dbReference type="EMDB" id="EMD-29272"/>
<dbReference type="EMDB" id="EMD-29273"/>
<dbReference type="EMDB" id="EMD-29274"/>
<dbReference type="EMDB" id="EMD-35370"/>
<dbReference type="EMDB" id="EMD-35371"/>
<dbReference type="EMDB" id="EMD-35596"/>
<dbReference type="EMDB" id="EMD-35597"/>
<dbReference type="SMR" id="Q96EY4"/>
<dbReference type="BioGRID" id="120600">
    <property type="interactions" value="101"/>
</dbReference>
<dbReference type="FunCoup" id="Q96EY4">
    <property type="interactions" value="2675"/>
</dbReference>
<dbReference type="IntAct" id="Q96EY4">
    <property type="interactions" value="47"/>
</dbReference>
<dbReference type="MINT" id="Q96EY4"/>
<dbReference type="STRING" id="9606.ENSP00000351380"/>
<dbReference type="GlyGen" id="Q96EY4">
    <property type="glycosylation" value="1 site, 1 O-linked glycan (1 site)"/>
</dbReference>
<dbReference type="iPTMnet" id="Q96EY4"/>
<dbReference type="PhosphoSitePlus" id="Q96EY4"/>
<dbReference type="BioMuta" id="TMA16"/>
<dbReference type="DMDM" id="190360168"/>
<dbReference type="jPOST" id="Q96EY4"/>
<dbReference type="MassIVE" id="Q96EY4"/>
<dbReference type="PaxDb" id="9606-ENSP00000351380"/>
<dbReference type="PeptideAtlas" id="Q96EY4"/>
<dbReference type="ProteomicsDB" id="76468"/>
<dbReference type="Pumba" id="Q96EY4"/>
<dbReference type="Antibodypedia" id="28270">
    <property type="antibodies" value="99 antibodies from 14 providers"/>
</dbReference>
<dbReference type="DNASU" id="55319"/>
<dbReference type="Ensembl" id="ENST00000358572.10">
    <property type="protein sequence ID" value="ENSP00000351380.5"/>
    <property type="gene ID" value="ENSG00000198498.10"/>
</dbReference>
<dbReference type="GeneID" id="55319"/>
<dbReference type="KEGG" id="hsa:55319"/>
<dbReference type="MANE-Select" id="ENST00000358572.10">
    <property type="protein sequence ID" value="ENSP00000351380.5"/>
    <property type="RefSeq nucleotide sequence ID" value="NM_018352.3"/>
    <property type="RefSeq protein sequence ID" value="NP_060822.2"/>
</dbReference>
<dbReference type="UCSC" id="uc003iqq.5">
    <property type="organism name" value="human"/>
</dbReference>
<dbReference type="AGR" id="HGNC:25638"/>
<dbReference type="CTD" id="55319"/>
<dbReference type="DisGeNET" id="55319"/>
<dbReference type="GeneCards" id="TMA16"/>
<dbReference type="HGNC" id="HGNC:25638">
    <property type="gene designation" value="TMA16"/>
</dbReference>
<dbReference type="HPA" id="ENSG00000198498">
    <property type="expression patterns" value="Low tissue specificity"/>
</dbReference>
<dbReference type="neXtProt" id="NX_Q96EY4"/>
<dbReference type="OpenTargets" id="ENSG00000198498"/>
<dbReference type="PharmGKB" id="PA162379923"/>
<dbReference type="VEuPathDB" id="HostDB:ENSG00000198498"/>
<dbReference type="eggNOG" id="ENOG502RXYZ">
    <property type="taxonomic scope" value="Eukaryota"/>
</dbReference>
<dbReference type="GeneTree" id="ENSGT00390000004179"/>
<dbReference type="HOGENOM" id="CLU_105581_1_0_1"/>
<dbReference type="InParanoid" id="Q96EY4"/>
<dbReference type="OMA" id="SWFLGQI"/>
<dbReference type="OrthoDB" id="270284at2759"/>
<dbReference type="PAN-GO" id="Q96EY4">
    <property type="GO annotations" value="1 GO annotation based on evolutionary models"/>
</dbReference>
<dbReference type="PhylomeDB" id="Q96EY4"/>
<dbReference type="TreeFam" id="TF324892"/>
<dbReference type="PathwayCommons" id="Q96EY4"/>
<dbReference type="SignaLink" id="Q96EY4"/>
<dbReference type="BioGRID-ORCS" id="55319">
    <property type="hits" value="662 hits in 1126 CRISPR screens"/>
</dbReference>
<dbReference type="CD-CODE" id="91857CE7">
    <property type="entry name" value="Nucleolus"/>
</dbReference>
<dbReference type="ChiTaRS" id="TMA16">
    <property type="organism name" value="human"/>
</dbReference>
<dbReference type="GenomeRNAi" id="55319"/>
<dbReference type="Pharos" id="Q96EY4">
    <property type="development level" value="Tdark"/>
</dbReference>
<dbReference type="PRO" id="PR:Q96EY4"/>
<dbReference type="Proteomes" id="UP000005640">
    <property type="component" value="Chromosome 4"/>
</dbReference>
<dbReference type="RNAct" id="Q96EY4">
    <property type="molecule type" value="protein"/>
</dbReference>
<dbReference type="Bgee" id="ENSG00000198498">
    <property type="expression patterns" value="Expressed in calcaneal tendon and 160 other cell types or tissues"/>
</dbReference>
<dbReference type="ExpressionAtlas" id="Q96EY4">
    <property type="expression patterns" value="baseline and differential"/>
</dbReference>
<dbReference type="GO" id="GO:0005730">
    <property type="term" value="C:nucleolus"/>
    <property type="evidence" value="ECO:0000314"/>
    <property type="project" value="HPA"/>
</dbReference>
<dbReference type="GO" id="GO:0005654">
    <property type="term" value="C:nucleoplasm"/>
    <property type="evidence" value="ECO:0000314"/>
    <property type="project" value="HPA"/>
</dbReference>
<dbReference type="GO" id="GO:0005634">
    <property type="term" value="C:nucleus"/>
    <property type="evidence" value="ECO:0007005"/>
    <property type="project" value="UniProtKB"/>
</dbReference>
<dbReference type="GO" id="GO:1990275">
    <property type="term" value="F:preribosome binding"/>
    <property type="evidence" value="ECO:0000314"/>
    <property type="project" value="UniProtKB"/>
</dbReference>
<dbReference type="GO" id="GO:0042273">
    <property type="term" value="P:ribosomal large subunit biogenesis"/>
    <property type="evidence" value="ECO:0000314"/>
    <property type="project" value="UniProtKB"/>
</dbReference>
<dbReference type="FunFam" id="1.20.1440.170:FF:000001">
    <property type="entry name" value="Translation machinery-associated 16 homolog"/>
    <property type="match status" value="1"/>
</dbReference>
<dbReference type="Gene3D" id="1.20.1440.170">
    <property type="entry name" value="Translation machinery-associated protein 16-like"/>
    <property type="match status" value="1"/>
</dbReference>
<dbReference type="InterPro" id="IPR021346">
    <property type="entry name" value="Tma16"/>
</dbReference>
<dbReference type="InterPro" id="IPR038356">
    <property type="entry name" value="Tma16_sf"/>
</dbReference>
<dbReference type="PANTHER" id="PTHR13349">
    <property type="entry name" value="TRANSLATION MACHINERY-ASSOCIATED PROTEIN 16"/>
    <property type="match status" value="1"/>
</dbReference>
<dbReference type="PANTHER" id="PTHR13349:SF2">
    <property type="entry name" value="TRANSLATION MACHINERY-ASSOCIATED PROTEIN 16"/>
    <property type="match status" value="1"/>
</dbReference>
<dbReference type="Pfam" id="PF11176">
    <property type="entry name" value="Tma16"/>
    <property type="match status" value="1"/>
</dbReference>
<name>TMA16_HUMAN</name>
<sequence length="203" mass="23864">MPKAPKGKSAGREKKVIHPYSRKAAQITREAHKQEKKEKLKNEKALRLNLVGEKLQWFQNHLDPQKKRYSKKDACELIERYLNRFSSELEQIELHNSIRDRQGRRHCSRETVIKQTMERERQQFEGYGLEIPDILNASNLKTFREWDFDLKKLPNIKMRKICANDAIPKTCKRKTIITVDQDLGELELNDESSDSDEEMTAVA</sequence>
<accession>Q96EY4</accession>
<accession>Q0P6E4</accession>
<accession>Q0P6J1</accession>
<accession>Q9NUR7</accession>